<comment type="function">
    <text evidence="1">Co-chaperone involved in the maturation of iron-sulfur cluster-containing proteins. Seems to help targeting proteins to be folded toward HscA.</text>
</comment>
<comment type="subunit">
    <text evidence="1">Interacts with HscA and stimulates its ATPase activity.</text>
</comment>
<comment type="similarity">
    <text evidence="1">Belongs to the HscB family.</text>
</comment>
<keyword id="KW-0143">Chaperone</keyword>
<keyword id="KW-1185">Reference proteome</keyword>
<protein>
    <recommendedName>
        <fullName evidence="1">Co-chaperone protein HscB homolog</fullName>
    </recommendedName>
</protein>
<gene>
    <name evidence="1" type="primary">hscB</name>
    <name type="ordered locus">Ping_1327</name>
</gene>
<reference key="1">
    <citation type="journal article" date="2008" name="BMC Genomics">
        <title>Genomics of an extreme psychrophile, Psychromonas ingrahamii.</title>
        <authorList>
            <person name="Riley M."/>
            <person name="Staley J.T."/>
            <person name="Danchin A."/>
            <person name="Wang T.Z."/>
            <person name="Brettin T.S."/>
            <person name="Hauser L.J."/>
            <person name="Land M.L."/>
            <person name="Thompson L.S."/>
        </authorList>
    </citation>
    <scope>NUCLEOTIDE SEQUENCE [LARGE SCALE GENOMIC DNA]</scope>
    <source>
        <strain>DSM 17664 / CCUG 51855 / 37</strain>
    </source>
</reference>
<proteinExistence type="inferred from homology"/>
<feature type="chain" id="PRO_1000083025" description="Co-chaperone protein HscB homolog">
    <location>
        <begin position="1"/>
        <end position="169"/>
    </location>
</feature>
<feature type="domain" description="J" evidence="1">
    <location>
        <begin position="2"/>
        <end position="74"/>
    </location>
</feature>
<sequence length="169" mass="19900">MNYFDLFSLPVIFPIDQTRLSETYRELQKQYHPDKFVMQNDSERLRAMQKSTEINDAYQTLKNSCLRAQYLLLLAGLDIALEHKTLQDTAFLVQQMEWRETIAAFTEDDQDKMDEFALQLQQQVAGLESKIEVQLQNDELEATADSIRQLKFMLKLQIELVLIEEKLFD</sequence>
<organism>
    <name type="scientific">Psychromonas ingrahamii (strain DSM 17664 / CCUG 51855 / 37)</name>
    <dbReference type="NCBI Taxonomy" id="357804"/>
    <lineage>
        <taxon>Bacteria</taxon>
        <taxon>Pseudomonadati</taxon>
        <taxon>Pseudomonadota</taxon>
        <taxon>Gammaproteobacteria</taxon>
        <taxon>Alteromonadales</taxon>
        <taxon>Psychromonadaceae</taxon>
        <taxon>Psychromonas</taxon>
    </lineage>
</organism>
<name>HSCB_PSYIN</name>
<accession>A1SUI7</accession>
<dbReference type="EMBL" id="CP000510">
    <property type="protein sequence ID" value="ABM03152.1"/>
    <property type="molecule type" value="Genomic_DNA"/>
</dbReference>
<dbReference type="RefSeq" id="WP_011769715.1">
    <property type="nucleotide sequence ID" value="NC_008709.1"/>
</dbReference>
<dbReference type="SMR" id="A1SUI7"/>
<dbReference type="STRING" id="357804.Ping_1327"/>
<dbReference type="KEGG" id="pin:Ping_1327"/>
<dbReference type="eggNOG" id="COG1076">
    <property type="taxonomic scope" value="Bacteria"/>
</dbReference>
<dbReference type="HOGENOM" id="CLU_068529_2_0_6"/>
<dbReference type="OrthoDB" id="287587at2"/>
<dbReference type="Proteomes" id="UP000000639">
    <property type="component" value="Chromosome"/>
</dbReference>
<dbReference type="GO" id="GO:1990230">
    <property type="term" value="C:iron-sulfur cluster transfer complex"/>
    <property type="evidence" value="ECO:0007669"/>
    <property type="project" value="TreeGrafter"/>
</dbReference>
<dbReference type="GO" id="GO:0001671">
    <property type="term" value="F:ATPase activator activity"/>
    <property type="evidence" value="ECO:0007669"/>
    <property type="project" value="InterPro"/>
</dbReference>
<dbReference type="GO" id="GO:0051087">
    <property type="term" value="F:protein-folding chaperone binding"/>
    <property type="evidence" value="ECO:0007669"/>
    <property type="project" value="InterPro"/>
</dbReference>
<dbReference type="GO" id="GO:0044571">
    <property type="term" value="P:[2Fe-2S] cluster assembly"/>
    <property type="evidence" value="ECO:0007669"/>
    <property type="project" value="InterPro"/>
</dbReference>
<dbReference type="GO" id="GO:0051259">
    <property type="term" value="P:protein complex oligomerization"/>
    <property type="evidence" value="ECO:0007669"/>
    <property type="project" value="InterPro"/>
</dbReference>
<dbReference type="GO" id="GO:0006457">
    <property type="term" value="P:protein folding"/>
    <property type="evidence" value="ECO:0007669"/>
    <property type="project" value="UniProtKB-UniRule"/>
</dbReference>
<dbReference type="CDD" id="cd06257">
    <property type="entry name" value="DnaJ"/>
    <property type="match status" value="1"/>
</dbReference>
<dbReference type="Gene3D" id="1.10.287.110">
    <property type="entry name" value="DnaJ domain"/>
    <property type="match status" value="1"/>
</dbReference>
<dbReference type="Gene3D" id="1.20.1280.20">
    <property type="entry name" value="HscB, C-terminal domain"/>
    <property type="match status" value="1"/>
</dbReference>
<dbReference type="HAMAP" id="MF_00682">
    <property type="entry name" value="HscB"/>
    <property type="match status" value="1"/>
</dbReference>
<dbReference type="InterPro" id="IPR001623">
    <property type="entry name" value="DnaJ_domain"/>
</dbReference>
<dbReference type="InterPro" id="IPR004640">
    <property type="entry name" value="HscB"/>
</dbReference>
<dbReference type="InterPro" id="IPR036386">
    <property type="entry name" value="HscB_C_sf"/>
</dbReference>
<dbReference type="InterPro" id="IPR009073">
    <property type="entry name" value="HscB_oligo_C"/>
</dbReference>
<dbReference type="InterPro" id="IPR036869">
    <property type="entry name" value="J_dom_sf"/>
</dbReference>
<dbReference type="NCBIfam" id="TIGR00714">
    <property type="entry name" value="hscB"/>
    <property type="match status" value="1"/>
</dbReference>
<dbReference type="PANTHER" id="PTHR14021">
    <property type="entry name" value="IRON-SULFUR CLUSTER CO-CHAPERONE PROTEIN HSCB"/>
    <property type="match status" value="1"/>
</dbReference>
<dbReference type="PANTHER" id="PTHR14021:SF15">
    <property type="entry name" value="IRON-SULFUR CLUSTER CO-CHAPERONE PROTEIN HSCB"/>
    <property type="match status" value="1"/>
</dbReference>
<dbReference type="Pfam" id="PF00226">
    <property type="entry name" value="DnaJ"/>
    <property type="match status" value="1"/>
</dbReference>
<dbReference type="Pfam" id="PF07743">
    <property type="entry name" value="HSCB_C"/>
    <property type="match status" value="1"/>
</dbReference>
<dbReference type="SMART" id="SM00271">
    <property type="entry name" value="DnaJ"/>
    <property type="match status" value="1"/>
</dbReference>
<dbReference type="SUPFAM" id="SSF46565">
    <property type="entry name" value="Chaperone J-domain"/>
    <property type="match status" value="1"/>
</dbReference>
<dbReference type="SUPFAM" id="SSF47144">
    <property type="entry name" value="HSC20 (HSCB), C-terminal oligomerisation domain"/>
    <property type="match status" value="1"/>
</dbReference>
<dbReference type="PROSITE" id="PS50076">
    <property type="entry name" value="DNAJ_2"/>
    <property type="match status" value="1"/>
</dbReference>
<evidence type="ECO:0000255" key="1">
    <source>
        <dbReference type="HAMAP-Rule" id="MF_00682"/>
    </source>
</evidence>